<feature type="chain" id="PRO_0000338074" description="Replicase polyprotein 1a">
    <location>
        <begin position="1"/>
        <end position="4376"/>
    </location>
</feature>
<feature type="chain" id="PRO_0000338075" description="Non-structural protein 1" evidence="1">
    <location>
        <begin position="1"/>
        <end position="179"/>
    </location>
</feature>
<feature type="chain" id="PRO_0000338076" description="Non-structural protein 2" evidence="1">
    <location>
        <begin position="180"/>
        <end position="818"/>
    </location>
</feature>
<feature type="chain" id="PRO_0000338077" description="Papain-like protease nsp3" evidence="1">
    <location>
        <begin position="819"/>
        <end position="2734"/>
    </location>
</feature>
<feature type="chain" id="PRO_0000338078" description="Non-structural protein 4" evidence="1">
    <location>
        <begin position="2735"/>
        <end position="3234"/>
    </location>
</feature>
<feature type="chain" id="PRO_0000338079" description="3C-like proteinase nsp5" evidence="1">
    <location>
        <begin position="3235"/>
        <end position="3540"/>
    </location>
</feature>
<feature type="chain" id="PRO_0000338080" description="Non-structural protein 6" evidence="1">
    <location>
        <begin position="3541"/>
        <end position="3830"/>
    </location>
</feature>
<feature type="chain" id="PRO_0000338081" description="Non-structural protein 7" evidence="1">
    <location>
        <begin position="3831"/>
        <end position="3913"/>
    </location>
</feature>
<feature type="chain" id="PRO_0000338082" description="Non-structural protein 8" evidence="1">
    <location>
        <begin position="3914"/>
        <end position="4111"/>
    </location>
</feature>
<feature type="chain" id="PRO_0000338083" description="RNA-capping enzyme subunit nsp9" evidence="1">
    <location>
        <begin position="4112"/>
        <end position="4224"/>
    </location>
</feature>
<feature type="chain" id="PRO_0000338084" description="Non-structural protein 10" evidence="1">
    <location>
        <begin position="4225"/>
        <end position="4363"/>
    </location>
</feature>
<feature type="chain" id="PRO_0000338085" description="Non-structural protein 11" evidence="3">
    <location>
        <begin position="4364"/>
        <end position="4376"/>
    </location>
</feature>
<feature type="transmembrane region" description="Helical" evidence="3">
    <location>
        <begin position="2197"/>
        <end position="2217"/>
    </location>
</feature>
<feature type="transmembrane region" description="Helical" evidence="3">
    <location>
        <begin position="2298"/>
        <end position="2318"/>
    </location>
</feature>
<feature type="transmembrane region" description="Helical" evidence="3">
    <location>
        <begin position="2345"/>
        <end position="2365"/>
    </location>
</feature>
<feature type="transmembrane region" description="Helical" evidence="3">
    <location>
        <begin position="2744"/>
        <end position="2764"/>
    </location>
</feature>
<feature type="transmembrane region" description="Helical" evidence="3">
    <location>
        <begin position="2986"/>
        <end position="3006"/>
    </location>
</feature>
<feature type="transmembrane region" description="Helical" evidence="3">
    <location>
        <begin position="3016"/>
        <end position="3036"/>
    </location>
</feature>
<feature type="transmembrane region" description="Helical" evidence="3">
    <location>
        <begin position="3048"/>
        <end position="3068"/>
    </location>
</feature>
<feature type="transmembrane region" description="Helical" evidence="3">
    <location>
        <begin position="3071"/>
        <end position="3091"/>
    </location>
</feature>
<feature type="transmembrane region" description="Helical" evidence="3">
    <location>
        <begin position="3099"/>
        <end position="3119"/>
    </location>
</feature>
<feature type="transmembrane region" description="Helical" evidence="3">
    <location>
        <begin position="3136"/>
        <end position="3156"/>
    </location>
</feature>
<feature type="transmembrane region" description="Helical" evidence="3">
    <location>
        <begin position="3558"/>
        <end position="3578"/>
    </location>
</feature>
<feature type="transmembrane region" description="Helical" evidence="3">
    <location>
        <begin position="3580"/>
        <end position="3600"/>
    </location>
</feature>
<feature type="transmembrane region" description="Helical" evidence="3">
    <location>
        <begin position="3606"/>
        <end position="3626"/>
    </location>
</feature>
<feature type="transmembrane region" description="Helical" evidence="3">
    <location>
        <begin position="3652"/>
        <end position="3672"/>
    </location>
</feature>
<feature type="transmembrane region" description="Helical" evidence="3">
    <location>
        <begin position="3679"/>
        <end position="3698"/>
    </location>
</feature>
<feature type="transmembrane region" description="Helical" evidence="3">
    <location>
        <begin position="3722"/>
        <end position="3742"/>
    </location>
</feature>
<feature type="transmembrane region" description="Helical" evidence="3">
    <location>
        <begin position="3750"/>
        <end position="3770"/>
    </location>
</feature>
<feature type="domain" description="CoV Nsp1 globular" evidence="15">
    <location>
        <begin position="12"/>
        <end position="127"/>
    </location>
</feature>
<feature type="domain" description="BetaCoV Nsp1 C-terminal" evidence="16">
    <location>
        <begin position="148"/>
        <end position="179"/>
    </location>
</feature>
<feature type="domain" description="CoV Nsp2 N-terminal" evidence="17">
    <location>
        <begin position="183"/>
        <end position="456"/>
    </location>
</feature>
<feature type="domain" description="CoV Nsp2 middle" evidence="18">
    <location>
        <begin position="458"/>
        <end position="688"/>
    </location>
</feature>
<feature type="domain" description="CoV Nsp2 C-terminal" evidence="19">
    <location>
        <begin position="690"/>
        <end position="818"/>
    </location>
</feature>
<feature type="domain" description="Ubiquitin-like 1" evidence="4">
    <location>
        <begin position="822"/>
        <end position="930"/>
    </location>
</feature>
<feature type="domain" description="Macro 1" evidence="6">
    <location>
        <begin position="998"/>
        <end position="1164"/>
    </location>
</feature>
<feature type="domain" description="Macro 2" evidence="6">
    <location>
        <begin position="1201"/>
        <end position="1329"/>
    </location>
</feature>
<feature type="domain" description="Macro 3" evidence="6">
    <location>
        <begin position="1337"/>
        <end position="1464"/>
    </location>
</feature>
<feature type="domain" description="DPUP" evidence="8">
    <location>
        <begin position="1466"/>
        <end position="1532"/>
    </location>
</feature>
<feature type="domain" description="Ubiquitin-like 2" evidence="4">
    <location>
        <begin position="1536"/>
        <end position="1591"/>
    </location>
</feature>
<feature type="domain" description="Peptidase C16" evidence="5">
    <location>
        <begin position="1605"/>
        <end position="1869"/>
    </location>
</feature>
<feature type="domain" description="Nucleic acid-binding" evidence="9">
    <location>
        <begin position="1882"/>
        <end position="1992"/>
    </location>
</feature>
<feature type="domain" description="G2M" evidence="22">
    <location>
        <begin position="2017"/>
        <end position="2126"/>
    </location>
</feature>
<feature type="domain" description="3Ecto" evidence="21">
    <location>
        <begin position="2218"/>
        <end position="2288"/>
    </location>
</feature>
<feature type="domain" description="CoV Nsp3 Y" evidence="20">
    <location>
        <begin position="2366"/>
        <end position="2734"/>
    </location>
</feature>
<feature type="domain" description="Nsp4C" evidence="10">
    <location>
        <begin position="3136"/>
        <end position="3234"/>
    </location>
</feature>
<feature type="domain" description="Peptidase C30" evidence="7">
    <location>
        <begin position="3235"/>
        <end position="3540"/>
    </location>
</feature>
<feature type="domain" description="RdRp Nsp7 cofactor" evidence="11">
    <location>
        <begin position="3831"/>
        <end position="3913"/>
    </location>
</feature>
<feature type="domain" description="RdRp Nsp8 cofactor" evidence="12">
    <location>
        <begin position="3914"/>
        <end position="4111"/>
    </location>
</feature>
<feature type="domain" description="Nsp9 ssRNA-binding" evidence="13">
    <location>
        <begin position="4112"/>
        <end position="4224"/>
    </location>
</feature>
<feature type="domain" description="ExoN/MTase coactivator" evidence="14">
    <location>
        <begin position="4225"/>
        <end position="4363"/>
    </location>
</feature>
<feature type="zinc finger region" description="C4-type" evidence="5">
    <location>
        <begin position="1723"/>
        <end position="1760"/>
    </location>
</feature>
<feature type="zinc finger region" evidence="1">
    <location>
        <begin position="4298"/>
        <end position="4314"/>
    </location>
</feature>
<feature type="zinc finger region" evidence="1">
    <location>
        <begin position="4341"/>
        <end position="4354"/>
    </location>
</feature>
<feature type="region of interest" description="C2H2" evidence="17">
    <location>
        <begin position="200"/>
        <end position="236"/>
    </location>
</feature>
<feature type="region of interest" description="C4" evidence="17">
    <location>
        <begin position="323"/>
        <end position="344"/>
    </location>
</feature>
<feature type="region of interest" description="C2HC" evidence="17">
    <location>
        <begin position="370"/>
        <end position="416"/>
    </location>
</feature>
<feature type="region of interest" description="HD1" evidence="1">
    <location>
        <begin position="2086"/>
        <end position="2365"/>
    </location>
</feature>
<feature type="region of interest" description="Y1" evidence="20">
    <location>
        <begin position="2366"/>
        <end position="2456"/>
    </location>
</feature>
<feature type="region of interest" description="ZF1" evidence="20">
    <location>
        <begin position="2370"/>
        <end position="2383"/>
    </location>
</feature>
<feature type="region of interest" description="ZF2" evidence="20">
    <location>
        <begin position="2416"/>
        <end position="2426"/>
    </location>
</feature>
<feature type="region of interest" description="CoV-Y" evidence="20">
    <location>
        <begin position="2457"/>
        <end position="2734"/>
    </location>
</feature>
<feature type="region of interest" description="Y2" evidence="20">
    <location>
        <begin position="2457"/>
        <end position="2551"/>
    </location>
</feature>
<feature type="region of interest" description="Y3" evidence="20">
    <location>
        <begin position="2552"/>
        <end position="2633"/>
    </location>
</feature>
<feature type="region of interest" description="Y4" evidence="20">
    <location>
        <begin position="2634"/>
        <end position="2734"/>
    </location>
</feature>
<feature type="region of interest" description="HD2" evidence="1">
    <location>
        <begin position="2749"/>
        <end position="3156"/>
    </location>
</feature>
<feature type="region of interest" description="HD3" evidence="1">
    <location>
        <begin position="3558"/>
        <end position="3770"/>
    </location>
</feature>
<feature type="active site" description="For PL-PRO activity" evidence="5">
    <location>
        <position position="1645"/>
    </location>
</feature>
<feature type="active site" description="For PL-PRO activity" evidence="5">
    <location>
        <position position="1806"/>
    </location>
</feature>
<feature type="active site" description="For PL-PRO activity" evidence="5">
    <location>
        <position position="1820"/>
    </location>
</feature>
<feature type="active site" description="For 3CL-PRO activity" evidence="7">
    <location>
        <position position="3275"/>
    </location>
</feature>
<feature type="active site" description="For 3CL-PRO activity" evidence="7">
    <location>
        <position position="3379"/>
    </location>
</feature>
<feature type="binding site" evidence="17">
    <location>
        <position position="200"/>
    </location>
    <ligand>
        <name>Zn(2+)</name>
        <dbReference type="ChEBI" id="CHEBI:29105"/>
        <label>1</label>
    </ligand>
</feature>
<feature type="binding site" evidence="17">
    <location>
        <position position="231"/>
    </location>
    <ligand>
        <name>Zn(2+)</name>
        <dbReference type="ChEBI" id="CHEBI:29105"/>
        <label>1</label>
    </ligand>
</feature>
<feature type="binding site" evidence="17">
    <location>
        <position position="234"/>
    </location>
    <ligand>
        <name>Zn(2+)</name>
        <dbReference type="ChEBI" id="CHEBI:29105"/>
        <label>1</label>
    </ligand>
</feature>
<feature type="binding site" evidence="17">
    <location>
        <position position="236"/>
    </location>
    <ligand>
        <name>Zn(2+)</name>
        <dbReference type="ChEBI" id="CHEBI:29105"/>
        <label>1</label>
    </ligand>
</feature>
<feature type="binding site" evidence="17">
    <location>
        <position position="323"/>
    </location>
    <ligand>
        <name>Zn(2+)</name>
        <dbReference type="ChEBI" id="CHEBI:29105"/>
        <label>2</label>
    </ligand>
</feature>
<feature type="binding site" evidence="17">
    <location>
        <position position="326"/>
    </location>
    <ligand>
        <name>Zn(2+)</name>
        <dbReference type="ChEBI" id="CHEBI:29105"/>
        <label>2</label>
    </ligand>
</feature>
<feature type="binding site" evidence="17">
    <location>
        <position position="341"/>
    </location>
    <ligand>
        <name>Zn(2+)</name>
        <dbReference type="ChEBI" id="CHEBI:29105"/>
        <label>2</label>
    </ligand>
</feature>
<feature type="binding site" evidence="17">
    <location>
        <position position="344"/>
    </location>
    <ligand>
        <name>Zn(2+)</name>
        <dbReference type="ChEBI" id="CHEBI:29105"/>
        <label>2</label>
    </ligand>
</feature>
<feature type="binding site" evidence="17">
    <location>
        <position position="370"/>
    </location>
    <ligand>
        <name>Zn(2+)</name>
        <dbReference type="ChEBI" id="CHEBI:29105"/>
        <label>3</label>
    </ligand>
</feature>
<feature type="binding site" evidence="17">
    <location>
        <position position="373"/>
    </location>
    <ligand>
        <name>Zn(2+)</name>
        <dbReference type="ChEBI" id="CHEBI:29105"/>
        <label>3</label>
    </ligand>
</feature>
<feature type="binding site" evidence="17">
    <location>
        <position position="382"/>
    </location>
    <ligand>
        <name>Zn(2+)</name>
        <dbReference type="ChEBI" id="CHEBI:29105"/>
        <label>3</label>
    </ligand>
</feature>
<feature type="binding site" evidence="17">
    <location>
        <position position="416"/>
    </location>
    <ligand>
        <name>Zn(2+)</name>
        <dbReference type="ChEBI" id="CHEBI:29105"/>
        <label>3</label>
    </ligand>
</feature>
<feature type="binding site" evidence="5">
    <location>
        <position position="1723"/>
    </location>
    <ligand>
        <name>Zn(2+)</name>
        <dbReference type="ChEBI" id="CHEBI:29105"/>
        <label>4</label>
    </ligand>
</feature>
<feature type="binding site" evidence="5">
    <location>
        <position position="1726"/>
    </location>
    <ligand>
        <name>Zn(2+)</name>
        <dbReference type="ChEBI" id="CHEBI:29105"/>
        <label>4</label>
    </ligand>
</feature>
<feature type="binding site" evidence="5">
    <location>
        <position position="1758"/>
    </location>
    <ligand>
        <name>Zn(2+)</name>
        <dbReference type="ChEBI" id="CHEBI:29105"/>
        <label>4</label>
    </ligand>
</feature>
<feature type="binding site" evidence="5">
    <location>
        <position position="1760"/>
    </location>
    <ligand>
        <name>Zn(2+)</name>
        <dbReference type="ChEBI" id="CHEBI:29105"/>
        <label>4</label>
    </ligand>
</feature>
<feature type="binding site" evidence="20">
    <location>
        <position position="2370"/>
    </location>
    <ligand>
        <name>Zn(2+)</name>
        <dbReference type="ChEBI" id="CHEBI:29105"/>
        <label>5</label>
    </ligand>
</feature>
<feature type="binding site" evidence="20">
    <location>
        <position position="2375"/>
    </location>
    <ligand>
        <name>Zn(2+)</name>
        <dbReference type="ChEBI" id="CHEBI:29105"/>
        <label>5</label>
    </ligand>
</feature>
<feature type="binding site" evidence="20">
    <location>
        <position position="2380"/>
    </location>
    <ligand>
        <name>Zn(2+)</name>
        <dbReference type="ChEBI" id="CHEBI:29105"/>
        <label>5</label>
    </ligand>
</feature>
<feature type="binding site" evidence="20">
    <location>
        <position position="2383"/>
    </location>
    <ligand>
        <name>Zn(2+)</name>
        <dbReference type="ChEBI" id="CHEBI:29105"/>
        <label>5</label>
    </ligand>
</feature>
<feature type="binding site" evidence="20">
    <location>
        <position position="2416"/>
    </location>
    <ligand>
        <name>Zn(2+)</name>
        <dbReference type="ChEBI" id="CHEBI:29105"/>
        <label>6</label>
    </ligand>
</feature>
<feature type="binding site" evidence="20">
    <location>
        <position position="2419"/>
    </location>
    <ligand>
        <name>Zn(2+)</name>
        <dbReference type="ChEBI" id="CHEBI:29105"/>
        <label>6</label>
    </ligand>
</feature>
<feature type="binding site" evidence="20">
    <location>
        <position position="2423"/>
    </location>
    <ligand>
        <name>Zn(2+)</name>
        <dbReference type="ChEBI" id="CHEBI:29105"/>
        <label>6</label>
    </ligand>
</feature>
<feature type="binding site" evidence="20">
    <location>
        <position position="2426"/>
    </location>
    <ligand>
        <name>Zn(2+)</name>
        <dbReference type="ChEBI" id="CHEBI:29105"/>
        <label>6</label>
    </ligand>
</feature>
<feature type="binding site" evidence="14">
    <location>
        <position position="4298"/>
    </location>
    <ligand>
        <name>Zn(2+)</name>
        <dbReference type="ChEBI" id="CHEBI:29105"/>
        <label>7</label>
    </ligand>
</feature>
<feature type="binding site" evidence="14">
    <location>
        <position position="4301"/>
    </location>
    <ligand>
        <name>Zn(2+)</name>
        <dbReference type="ChEBI" id="CHEBI:29105"/>
        <label>7</label>
    </ligand>
</feature>
<feature type="binding site" evidence="14">
    <location>
        <position position="4307"/>
    </location>
    <ligand>
        <name>Zn(2+)</name>
        <dbReference type="ChEBI" id="CHEBI:29105"/>
        <label>7</label>
    </ligand>
</feature>
<feature type="binding site" evidence="14">
    <location>
        <position position="4314"/>
    </location>
    <ligand>
        <name>Zn(2+)</name>
        <dbReference type="ChEBI" id="CHEBI:29105"/>
        <label>7</label>
    </ligand>
</feature>
<feature type="binding site" evidence="14">
    <location>
        <position position="4341"/>
    </location>
    <ligand>
        <name>Zn(2+)</name>
        <dbReference type="ChEBI" id="CHEBI:29105"/>
        <label>8</label>
    </ligand>
</feature>
<feature type="binding site" evidence="14">
    <location>
        <position position="4344"/>
    </location>
    <ligand>
        <name>Zn(2+)</name>
        <dbReference type="ChEBI" id="CHEBI:29105"/>
        <label>8</label>
    </ligand>
</feature>
<feature type="binding site" evidence="14">
    <location>
        <position position="4352"/>
    </location>
    <ligand>
        <name>Zn(2+)</name>
        <dbReference type="ChEBI" id="CHEBI:29105"/>
        <label>8</label>
    </ligand>
</feature>
<feature type="binding site" evidence="14">
    <location>
        <position position="4354"/>
    </location>
    <ligand>
        <name>Zn(2+)</name>
        <dbReference type="ChEBI" id="CHEBI:29105"/>
        <label>8</label>
    </ligand>
</feature>
<feature type="site" description="Cleavage; by PL-PRO" evidence="1">
    <location>
        <begin position="179"/>
        <end position="180"/>
    </location>
</feature>
<feature type="site" description="Cleavage; by PL-PRO" evidence="1">
    <location>
        <begin position="818"/>
        <end position="819"/>
    </location>
</feature>
<feature type="site" description="Cleavage; by 3CL-PRO" evidence="1">
    <location>
        <begin position="3234"/>
        <end position="3235"/>
    </location>
</feature>
<feature type="site" description="Cleavage; by 3CL-PRO" evidence="1">
    <location>
        <begin position="3540"/>
        <end position="3541"/>
    </location>
</feature>
<feature type="site" description="Cleavage; by 3CL-PRO" evidence="1">
    <location>
        <begin position="3830"/>
        <end position="3831"/>
    </location>
</feature>
<feature type="site" description="Cleavage; by 3CL-PRO" evidence="1">
    <location>
        <begin position="3913"/>
        <end position="3914"/>
    </location>
</feature>
<feature type="site" description="Cleavage; by 3CL-PRO" evidence="1">
    <location>
        <begin position="4111"/>
        <end position="4112"/>
    </location>
</feature>
<feature type="site" description="Cleavage; by 3CL-PRO" evidence="1">
    <location>
        <begin position="4224"/>
        <end position="4225"/>
    </location>
</feature>
<feature type="site" description="Cleavage; by 3CL-PRO" evidence="1">
    <location>
        <begin position="4363"/>
        <end position="4364"/>
    </location>
</feature>
<feature type="disulfide bond" evidence="21">
    <location>
        <begin position="2234"/>
        <end position="2262"/>
    </location>
</feature>
<feature type="disulfide bond" evidence="21">
    <location>
        <begin position="2253"/>
        <end position="2259"/>
    </location>
</feature>
<gene>
    <name type="ORF">1a</name>
</gene>
<keyword id="KW-1072">Activation of host autophagy by virus</keyword>
<keyword id="KW-1132">Decay of host mRNAs by virus</keyword>
<keyword id="KW-1015">Disulfide bond</keyword>
<keyword id="KW-0255">Endonuclease</keyword>
<keyword id="KW-1262">Eukaryotic host gene expression shutoff by virus</keyword>
<keyword id="KW-1193">Eukaryotic host translation shutoff by virus</keyword>
<keyword id="KW-1035">Host cytoplasm</keyword>
<keyword id="KW-1190">Host gene expression shutoff by virus</keyword>
<keyword id="KW-1043">Host membrane</keyword>
<keyword id="KW-1192">Host mRNA suppression by virus</keyword>
<keyword id="KW-0945">Host-virus interaction</keyword>
<keyword id="KW-0378">Hydrolase</keyword>
<keyword id="KW-1090">Inhibition of host innate immune response by virus</keyword>
<keyword id="KW-1114">Inhibition of host interferon signaling pathway by virus</keyword>
<keyword id="KW-1092">Inhibition of host IRF3 by virus</keyword>
<keyword id="KW-1095">Inhibition of host ISG15 by virus</keyword>
<keyword id="KW-1113">Inhibition of host RLR pathway by virus</keyword>
<keyword id="KW-0922">Interferon antiviral system evasion</keyword>
<keyword id="KW-0472">Membrane</keyword>
<keyword id="KW-0479">Metal-binding</keyword>
<keyword id="KW-0489">Methyltransferase</keyword>
<keyword id="KW-1127">Modulation of host ubiquitin pathway by viral deubiquitinase</keyword>
<keyword id="KW-1130">Modulation of host ubiquitin pathway by virus</keyword>
<keyword id="KW-0540">Nuclease</keyword>
<keyword id="KW-0645">Protease</keyword>
<keyword id="KW-0677">Repeat</keyword>
<keyword id="KW-0688">Ribosomal frameshifting</keyword>
<keyword id="KW-0694">RNA-binding</keyword>
<keyword id="KW-0788">Thiol protease</keyword>
<keyword id="KW-0808">Transferase</keyword>
<keyword id="KW-0812">Transmembrane</keyword>
<keyword id="KW-1133">Transmembrane helix</keyword>
<keyword id="KW-0833">Ubl conjugation pathway</keyword>
<keyword id="KW-0899">Viral immunoevasion</keyword>
<keyword id="KW-0862">Zinc</keyword>
<keyword id="KW-0863">Zinc-finger</keyword>
<proteinExistence type="inferred from homology"/>
<reference key="1">
    <citation type="journal article" date="2005" name="Proc. Natl. Acad. Sci. U.S.A.">
        <title>Severe acute respiratory syndrome coronavirus-like virus in Chinese horseshoe bats.</title>
        <authorList>
            <person name="Lau S.K.P."/>
            <person name="Woo P.C.Y."/>
            <person name="Li K.S.M."/>
            <person name="Huang Y."/>
            <person name="Tsoi H.-W."/>
            <person name="Wong B.H.L."/>
            <person name="Wong S.S.Y."/>
            <person name="Leung S.-Y."/>
            <person name="Chan K.-H."/>
            <person name="Yuen K.-Y."/>
        </authorList>
    </citation>
    <scope>NUCLEOTIDE SEQUENCE [GENOMIC RNA]</scope>
    <source>
        <strain>Isolate HKU3-1</strain>
    </source>
</reference>
<evidence type="ECO:0000250" key="1"/>
<evidence type="ECO:0000250" key="2">
    <source>
        <dbReference type="UniProtKB" id="P0DTC1"/>
    </source>
</evidence>
<evidence type="ECO:0000255" key="3"/>
<evidence type="ECO:0000255" key="4">
    <source>
        <dbReference type="PROSITE-ProRule" id="PRU00214"/>
    </source>
</evidence>
<evidence type="ECO:0000255" key="5">
    <source>
        <dbReference type="PROSITE-ProRule" id="PRU00444"/>
    </source>
</evidence>
<evidence type="ECO:0000255" key="6">
    <source>
        <dbReference type="PROSITE-ProRule" id="PRU00490"/>
    </source>
</evidence>
<evidence type="ECO:0000255" key="7">
    <source>
        <dbReference type="PROSITE-ProRule" id="PRU00772"/>
    </source>
</evidence>
<evidence type="ECO:0000255" key="8">
    <source>
        <dbReference type="PROSITE-ProRule" id="PRU01289"/>
    </source>
</evidence>
<evidence type="ECO:0000255" key="9">
    <source>
        <dbReference type="PROSITE-ProRule" id="PRU01290"/>
    </source>
</evidence>
<evidence type="ECO:0000255" key="10">
    <source>
        <dbReference type="PROSITE-ProRule" id="PRU01291"/>
    </source>
</evidence>
<evidence type="ECO:0000255" key="11">
    <source>
        <dbReference type="PROSITE-ProRule" id="PRU01294"/>
    </source>
</evidence>
<evidence type="ECO:0000255" key="12">
    <source>
        <dbReference type="PROSITE-ProRule" id="PRU01295"/>
    </source>
</evidence>
<evidence type="ECO:0000255" key="13">
    <source>
        <dbReference type="PROSITE-ProRule" id="PRU01296"/>
    </source>
</evidence>
<evidence type="ECO:0000255" key="14">
    <source>
        <dbReference type="PROSITE-ProRule" id="PRU01297"/>
    </source>
</evidence>
<evidence type="ECO:0000255" key="15">
    <source>
        <dbReference type="PROSITE-ProRule" id="PRU01307"/>
    </source>
</evidence>
<evidence type="ECO:0000255" key="16">
    <source>
        <dbReference type="PROSITE-ProRule" id="PRU01308"/>
    </source>
</evidence>
<evidence type="ECO:0000255" key="17">
    <source>
        <dbReference type="PROSITE-ProRule" id="PRU01333"/>
    </source>
</evidence>
<evidence type="ECO:0000255" key="18">
    <source>
        <dbReference type="PROSITE-ProRule" id="PRU01334"/>
    </source>
</evidence>
<evidence type="ECO:0000255" key="19">
    <source>
        <dbReference type="PROSITE-ProRule" id="PRU01335"/>
    </source>
</evidence>
<evidence type="ECO:0000255" key="20">
    <source>
        <dbReference type="PROSITE-ProRule" id="PRU01336"/>
    </source>
</evidence>
<evidence type="ECO:0000255" key="21">
    <source>
        <dbReference type="PROSITE-ProRule" id="PRU01337"/>
    </source>
</evidence>
<evidence type="ECO:0000255" key="22">
    <source>
        <dbReference type="PROSITE-ProRule" id="PRU01338"/>
    </source>
</evidence>
<evidence type="ECO:0000305" key="23"/>
<organism>
    <name type="scientific">Bat coronavirus HKU3</name>
    <name type="common">BtCoV</name>
    <name type="synonym">SARS-like coronavirus HKU3</name>
    <dbReference type="NCBI Taxonomy" id="442736"/>
    <lineage>
        <taxon>Viruses</taxon>
        <taxon>Riboviria</taxon>
        <taxon>Orthornavirae</taxon>
        <taxon>Pisuviricota</taxon>
        <taxon>Pisoniviricetes</taxon>
        <taxon>Nidovirales</taxon>
        <taxon>Cornidovirineae</taxon>
        <taxon>Coronaviridae</taxon>
        <taxon>Orthocoronavirinae</taxon>
        <taxon>Betacoronavirus</taxon>
        <taxon>Sarbecovirus</taxon>
        <taxon>Severe acute respiratory syndrome coronavirus</taxon>
    </lineage>
</organism>
<protein>
    <recommendedName>
        <fullName>Replicase polyprotein 1a</fullName>
        <shortName>pp1a</shortName>
    </recommendedName>
    <alternativeName>
        <fullName>ORF1a polyprotein</fullName>
    </alternativeName>
    <component>
        <recommendedName>
            <fullName>Non-structural protein 1</fullName>
            <shortName>nsp1</shortName>
        </recommendedName>
        <alternativeName>
            <fullName>Leader protein</fullName>
        </alternativeName>
    </component>
    <component>
        <recommendedName>
            <fullName>Non-structural protein 2</fullName>
            <shortName>nsp2</shortName>
        </recommendedName>
        <alternativeName>
            <fullName>p65 homolog</fullName>
        </alternativeName>
    </component>
    <component>
        <recommendedName>
            <fullName>Papain-like protease nsp3</fullName>
            <shortName>PL-PRO</shortName>
            <ecNumber>3.4.19.12</ecNumber>
            <ecNumber>3.4.22.-</ecNumber>
        </recommendedName>
        <alternativeName>
            <fullName>Non-structural protein 3</fullName>
            <shortName>nsp3</shortName>
        </alternativeName>
        <alternativeName>
            <fullName>PL2-PRO</fullName>
        </alternativeName>
    </component>
    <component>
        <recommendedName>
            <fullName>Non-structural protein 4</fullName>
            <shortName>nsp4</shortName>
        </recommendedName>
    </component>
    <component>
        <recommendedName>
            <fullName>3C-like proteinase nsp5</fullName>
            <shortName>3CL-PRO</shortName>
            <shortName>3CLp</shortName>
            <ecNumber>3.4.22.69</ecNumber>
        </recommendedName>
        <alternativeName>
            <fullName>nsp5</fullName>
        </alternativeName>
    </component>
    <component>
        <recommendedName>
            <fullName>Non-structural protein 6</fullName>
            <shortName>nsp6</shortName>
        </recommendedName>
    </component>
    <component>
        <recommendedName>
            <fullName>Non-structural protein 7</fullName>
            <shortName>nsp7</shortName>
        </recommendedName>
    </component>
    <component>
        <recommendedName>
            <fullName>Non-structural protein 8</fullName>
            <shortName>nsp8</shortName>
        </recommendedName>
    </component>
    <component>
        <recommendedName>
            <fullName>RNA-capping enzyme subunit nsp9</fullName>
        </recommendedName>
        <alternativeName>
            <fullName>Non-structural protein 9</fullName>
            <shortName>nsp9</shortName>
            <ecNumber>2.7.7.50</ecNumber>
        </alternativeName>
    </component>
    <component>
        <recommendedName>
            <fullName>Non-structural protein 10</fullName>
            <shortName>nsp10</shortName>
        </recommendedName>
        <alternativeName>
            <fullName>Growth factor-like peptide</fullName>
            <shortName>GFL</shortName>
        </alternativeName>
    </component>
    <component>
        <recommendedName>
            <fullName>Non-structural protein 11</fullName>
            <shortName>nsp11</shortName>
        </recommendedName>
    </component>
</protein>
<comment type="function">
    <text evidence="1">The papain-like proteinase (PL-PRO) is responsible for the cleavages located at the N-terminus of replicase polyprotein. In addition, PL-PRO possesses a deubiquitinating/deISGylating activity and processes both 'Lys-48'- and 'Lys-63'-linked polyubiquitin chains from cellular substrates. Antagonizes innate immune induction of type I interferon by blocking the phosphorylation, dimerization and subsequent nuclear translocation of host IRF-3 (By similarity).</text>
</comment>
<comment type="function">
    <molecule>3C-like proteinase nsp5</molecule>
    <text evidence="7">Responsible for the majority of cleavages as it cleaves the C-terminus of replicase polyprotein at 11 sites. Recognizes substrates containing the core sequence [ILMVF]-Q-|-[SGACN]. Inhibited by the substrate-analog Cbz-Val-Asn-Ser-Thr-Leu-Gln-CMK. Also contains an ADP-ribose-1''-phosphate (ADRP)-binding function (By similarity).</text>
</comment>
<comment type="function">
    <text evidence="1">Nsp7-nsp8 hexadecamer may possibly confer processivity to the polymerase, maybe by binding to dsRNA or by producing primers utilized by the latter.</text>
</comment>
<comment type="function">
    <molecule>RNA-capping enzyme subunit nsp9</molecule>
    <text evidence="2">Catalytic subunit of viral RNA capping enzyme which catalyzes the RNA guanylyltransferase reaction for genomic and sub-genomic RNAs. The kinase-like NiRAN domain of NSP12 transfers RNA to the amino terminus of NSP9, forming a covalent RNA-protein intermediate. Subsequently, the NiRAN domain transfers RNA to GDP, forming the core cap structure GpppA-RNA. The NSP14 and NSP16 methyltransferases then add methyl groups to form functional cap structures.</text>
</comment>
<comment type="function">
    <molecule>Non-structural protein 1</molecule>
    <text evidence="1">Binds to the 40S ribosomal subunit and inhibits host translation. The nsp1-40S ribosome complex further induces an endonucleolytic cleavage near the 5'UTR of host mRNAs, targeting them for degradation. By suppressing host gene expression, nsp1 facilitates efficient viral gene expression in infected cells and evasion from host immune response (By similarity).</text>
</comment>
<comment type="catalytic activity">
    <molecule>Papain-like protease nsp3</molecule>
    <reaction evidence="2">
        <text>Thiol-dependent hydrolysis of ester, thioester, amide, peptide and isopeptide bonds formed by the C-terminal Gly of ubiquitin (a 76-residue protein attached to proteins as an intracellular targeting signal).</text>
        <dbReference type="EC" id="3.4.19.12"/>
    </reaction>
</comment>
<comment type="catalytic activity">
    <molecule>3C-like proteinase nsp5</molecule>
    <reaction evidence="2">
        <text>TSAVLQ-|-SGFRK-NH2 and SGVTFQ-|-GKFKK the two peptides corresponding to the two self-cleavage sites of the SARS 3C-like proteinase are the two most reactive peptide substrates. The enzyme exhibits a strong preference for substrates containing Gln at P1 position and Leu at P2 position.</text>
        <dbReference type="EC" id="3.4.22.69"/>
    </reaction>
</comment>
<comment type="catalytic activity">
    <molecule>RNA-capping enzyme subunit nsp9</molecule>
    <reaction evidence="2">
        <text>a 5'-end diphospho-ribonucleoside in mRNA + GTP + H(+) = a 5'-end (5'-triphosphoguanosine)-ribonucleoside in mRNA + diphosphate</text>
        <dbReference type="Rhea" id="RHEA:67012"/>
        <dbReference type="Rhea" id="RHEA-COMP:17165"/>
        <dbReference type="Rhea" id="RHEA-COMP:17166"/>
        <dbReference type="ChEBI" id="CHEBI:15378"/>
        <dbReference type="ChEBI" id="CHEBI:33019"/>
        <dbReference type="ChEBI" id="CHEBI:37565"/>
        <dbReference type="ChEBI" id="CHEBI:167616"/>
        <dbReference type="ChEBI" id="CHEBI:167617"/>
        <dbReference type="EC" id="2.7.7.50"/>
    </reaction>
    <physiologicalReaction direction="right-to-left" evidence="2">
        <dbReference type="Rhea" id="RHEA:67014"/>
    </physiologicalReaction>
</comment>
<comment type="subunit">
    <text evidence="1">3CL-PRO exists as monomer and homodimer. Eight copies of nsp7 and eight copies of nsp8 assemble to form a heterohexadecamer. Nsp9 is a dimer. Nsp10 forms a dodecamer (By similarity).</text>
</comment>
<comment type="subcellular location">
    <molecule>Papain-like protease nsp3</molecule>
    <subcellularLocation>
        <location evidence="23">Host membrane</location>
        <topology evidence="23">Multi-pass membrane protein</topology>
    </subcellularLocation>
</comment>
<comment type="subcellular location">
    <molecule>Non-structural protein 4</molecule>
    <subcellularLocation>
        <location evidence="23">Host membrane</location>
        <topology evidence="23">Multi-pass membrane protein</topology>
    </subcellularLocation>
</comment>
<comment type="subcellular location">
    <molecule>Non-structural protein 6</molecule>
    <subcellularLocation>
        <location evidence="23">Host membrane</location>
        <topology evidence="23">Multi-pass membrane protein</topology>
    </subcellularLocation>
</comment>
<comment type="subcellular location">
    <molecule>Non-structural protein 7</molecule>
    <subcellularLocation>
        <location evidence="1">Host cytoplasm</location>
        <location evidence="1">Host perinuclear region</location>
    </subcellularLocation>
    <text evidence="1">nsp7, nsp8, nsp9 and nsp10 are localized in cytoplasmic foci, largely perinuclear. Late in infection, they merge into confluent complexes (By similarity).</text>
</comment>
<comment type="subcellular location">
    <molecule>Non-structural protein 8</molecule>
    <subcellularLocation>
        <location evidence="1">Host cytoplasm</location>
        <location evidence="1">Host perinuclear region</location>
    </subcellularLocation>
    <text evidence="1">nsp7, nsp8, nsp9 and nsp10 are localized in cytoplasmic foci, largely perinuclear. Late in infection, they merge into confluent complexes (By similarity).</text>
</comment>
<comment type="subcellular location">
    <molecule>RNA-capping enzyme subunit nsp9</molecule>
    <subcellularLocation>
        <location evidence="1">Host cytoplasm</location>
        <location evidence="1">Host perinuclear region</location>
    </subcellularLocation>
    <text evidence="1">nsp7, nsp8, nsp9 and nsp10 are localized in cytoplasmic foci, largely perinuclear. Late in infection, they merge into confluent complexes (By similarity).</text>
</comment>
<comment type="subcellular location">
    <molecule>Non-structural protein 10</molecule>
    <subcellularLocation>
        <location evidence="1">Host cytoplasm</location>
        <location evidence="1">Host perinuclear region</location>
    </subcellularLocation>
    <text evidence="1">nsp7, nsp8, nsp9 and nsp10 are localized in cytoplasmic foci, largely perinuclear. Late in infection, they merge into confluent complexes (By similarity).</text>
</comment>
<comment type="alternative products">
    <event type="ribosomal frameshifting"/>
    <isoform>
        <id>P0C6F8-1</id>
        <name>Replicase polyprotein 1a</name>
        <name>pp1a</name>
        <name>ORF1a polyprotein</name>
        <sequence type="displayed"/>
    </isoform>
    <isoform>
        <id>P0C6W2-1</id>
        <name>Replicase polyprotein 1ab</name>
        <name>pp1ab</name>
        <sequence type="external"/>
    </isoform>
</comment>
<comment type="domain">
    <text evidence="1">The hydrophobic domains (HD) could mediate the membrane association of the replication complex and thereby alter the architecture of the host cell membrane.</text>
</comment>
<comment type="PTM">
    <text evidence="1">Specific enzymatic cleavages in vivo by its own proteases yield mature proteins. 3CL-PRO and PL-PRO proteinases are autocatalytically processed (By similarity).</text>
</comment>
<comment type="miscellaneous">
    <text>Bat coronavirus HKU3 is highly similar to SARS-CoV (SARS-like).</text>
</comment>
<comment type="miscellaneous">
    <molecule>Isoform Replicase polyprotein 1a</molecule>
    <text>Produced by conventional translation.</text>
</comment>
<comment type="similarity">
    <text evidence="23">Belongs to the coronaviruses polyprotein 1ab family.</text>
</comment>
<dbReference type="EC" id="3.4.19.12"/>
<dbReference type="EC" id="3.4.22.-"/>
<dbReference type="EC" id="3.4.22.69"/>
<dbReference type="EC" id="2.7.7.50"/>
<dbReference type="EMBL" id="DQ022305">
    <property type="status" value="NOT_ANNOTATED_CDS"/>
    <property type="molecule type" value="Genomic_RNA"/>
</dbReference>
<dbReference type="BMRB" id="P0C6F8"/>
<dbReference type="SMR" id="P0C6F8"/>
<dbReference type="Proteomes" id="UP000007450">
    <property type="component" value="Segment"/>
</dbReference>
<dbReference type="GO" id="GO:0033644">
    <property type="term" value="C:host cell membrane"/>
    <property type="evidence" value="ECO:0007669"/>
    <property type="project" value="UniProtKB-SubCell"/>
</dbReference>
<dbReference type="GO" id="GO:0044220">
    <property type="term" value="C:host cell perinuclear region of cytoplasm"/>
    <property type="evidence" value="ECO:0007669"/>
    <property type="project" value="UniProtKB-SubCell"/>
</dbReference>
<dbReference type="GO" id="GO:0016020">
    <property type="term" value="C:membrane"/>
    <property type="evidence" value="ECO:0007669"/>
    <property type="project" value="UniProtKB-KW"/>
</dbReference>
<dbReference type="GO" id="GO:0004843">
    <property type="term" value="F:cysteine-type deubiquitinase activity"/>
    <property type="evidence" value="ECO:0007669"/>
    <property type="project" value="UniProtKB-EC"/>
</dbReference>
<dbReference type="GO" id="GO:0004197">
    <property type="term" value="F:cysteine-type endopeptidase activity"/>
    <property type="evidence" value="ECO:0007669"/>
    <property type="project" value="InterPro"/>
</dbReference>
<dbReference type="GO" id="GO:0004519">
    <property type="term" value="F:endonuclease activity"/>
    <property type="evidence" value="ECO:0007669"/>
    <property type="project" value="UniProtKB-KW"/>
</dbReference>
<dbReference type="GO" id="GO:0002151">
    <property type="term" value="F:G-quadruplex RNA binding"/>
    <property type="evidence" value="ECO:0007669"/>
    <property type="project" value="InterPro"/>
</dbReference>
<dbReference type="GO" id="GO:0008168">
    <property type="term" value="F:methyltransferase activity"/>
    <property type="evidence" value="ECO:0007669"/>
    <property type="project" value="UniProtKB-KW"/>
</dbReference>
<dbReference type="GO" id="GO:0008242">
    <property type="term" value="F:omega peptidase activity"/>
    <property type="evidence" value="ECO:0007669"/>
    <property type="project" value="InterPro"/>
</dbReference>
<dbReference type="GO" id="GO:0003727">
    <property type="term" value="F:single-stranded RNA binding"/>
    <property type="evidence" value="ECO:0007669"/>
    <property type="project" value="InterPro"/>
</dbReference>
<dbReference type="GO" id="GO:0008270">
    <property type="term" value="F:zinc ion binding"/>
    <property type="evidence" value="ECO:0007669"/>
    <property type="project" value="UniProtKB-KW"/>
</dbReference>
<dbReference type="GO" id="GO:0032259">
    <property type="term" value="P:methylation"/>
    <property type="evidence" value="ECO:0007669"/>
    <property type="project" value="UniProtKB-KW"/>
</dbReference>
<dbReference type="GO" id="GO:0006508">
    <property type="term" value="P:proteolysis"/>
    <property type="evidence" value="ECO:0007669"/>
    <property type="project" value="UniProtKB-KW"/>
</dbReference>
<dbReference type="GO" id="GO:0010506">
    <property type="term" value="P:regulation of autophagy"/>
    <property type="evidence" value="ECO:0007669"/>
    <property type="project" value="InterPro"/>
</dbReference>
<dbReference type="GO" id="GO:0039520">
    <property type="term" value="P:symbiont-mediated activation of host autophagy"/>
    <property type="evidence" value="ECO:0007669"/>
    <property type="project" value="UniProtKB-KW"/>
</dbReference>
<dbReference type="GO" id="GO:0039595">
    <property type="term" value="P:symbiont-mediated degradation of host mRNA"/>
    <property type="evidence" value="ECO:0007669"/>
    <property type="project" value="UniProtKB-KW"/>
</dbReference>
<dbReference type="GO" id="GO:0039648">
    <property type="term" value="P:symbiont-mediated perturbation of host ubiquitin-like protein modification"/>
    <property type="evidence" value="ECO:0007669"/>
    <property type="project" value="UniProtKB-KW"/>
</dbReference>
<dbReference type="GO" id="GO:0039548">
    <property type="term" value="P:symbiont-mediated suppression of host cytoplasmic pattern recognition receptor signaling pathway via inhibition of IRF3 activity"/>
    <property type="evidence" value="ECO:0007669"/>
    <property type="project" value="UniProtKB-KW"/>
</dbReference>
<dbReference type="GO" id="GO:0039657">
    <property type="term" value="P:symbiont-mediated suppression of host gene expression"/>
    <property type="evidence" value="ECO:0007669"/>
    <property type="project" value="UniProtKB-KW"/>
</dbReference>
<dbReference type="GO" id="GO:0039579">
    <property type="term" value="P:symbiont-mediated suppression of host ISG15-protein conjugation"/>
    <property type="evidence" value="ECO:0007669"/>
    <property type="project" value="UniProtKB-KW"/>
</dbReference>
<dbReference type="GO" id="GO:0039502">
    <property type="term" value="P:symbiont-mediated suppression of host type I interferon-mediated signaling pathway"/>
    <property type="evidence" value="ECO:0007669"/>
    <property type="project" value="UniProtKB-KW"/>
</dbReference>
<dbReference type="GO" id="GO:0019079">
    <property type="term" value="P:viral genome replication"/>
    <property type="evidence" value="ECO:0007669"/>
    <property type="project" value="InterPro"/>
</dbReference>
<dbReference type="GO" id="GO:0019082">
    <property type="term" value="P:viral protein processing"/>
    <property type="evidence" value="ECO:0007669"/>
    <property type="project" value="InterPro"/>
</dbReference>
<dbReference type="GO" id="GO:0075523">
    <property type="term" value="P:viral translational frameshifting"/>
    <property type="evidence" value="ECO:0007669"/>
    <property type="project" value="UniProtKB-KW"/>
</dbReference>
<dbReference type="CDD" id="cd21560">
    <property type="entry name" value="betaCoV-Nsp6"/>
    <property type="match status" value="1"/>
</dbReference>
<dbReference type="CDD" id="cd21516">
    <property type="entry name" value="betaCoV_Nsp2_SARS-like"/>
    <property type="match status" value="1"/>
</dbReference>
<dbReference type="CDD" id="cd21666">
    <property type="entry name" value="betaCoV_Nsp5_Mpro"/>
    <property type="match status" value="1"/>
</dbReference>
<dbReference type="CDD" id="cd21827">
    <property type="entry name" value="betaCoV_Nsp7"/>
    <property type="match status" value="1"/>
</dbReference>
<dbReference type="CDD" id="cd21831">
    <property type="entry name" value="betaCoV_Nsp8"/>
    <property type="match status" value="1"/>
</dbReference>
<dbReference type="CDD" id="cd21898">
    <property type="entry name" value="betaCoV_Nsp9"/>
    <property type="match status" value="1"/>
</dbReference>
<dbReference type="CDD" id="cd21732">
    <property type="entry name" value="betaCoV_PLPro"/>
    <property type="match status" value="1"/>
</dbReference>
<dbReference type="CDD" id="cd21872">
    <property type="entry name" value="CoV_Nsp10"/>
    <property type="match status" value="1"/>
</dbReference>
<dbReference type="CDD" id="cd21473">
    <property type="entry name" value="cv_Nsp4_TM"/>
    <property type="match status" value="1"/>
</dbReference>
<dbReference type="CDD" id="cd21563">
    <property type="entry name" value="Macro_cv_SUD-M_Nsp3-like"/>
    <property type="match status" value="1"/>
</dbReference>
<dbReference type="CDD" id="cd21562">
    <property type="entry name" value="Macro_cv_SUD-N_Nsp3-like"/>
    <property type="match status" value="1"/>
</dbReference>
<dbReference type="CDD" id="cd21557">
    <property type="entry name" value="Macro_X_Nsp3-like"/>
    <property type="match status" value="1"/>
</dbReference>
<dbReference type="CDD" id="cd22662">
    <property type="entry name" value="SARS-CoV-like_Nsp1_C"/>
    <property type="match status" value="1"/>
</dbReference>
<dbReference type="CDD" id="cd21796">
    <property type="entry name" value="SARS-CoV-like_Nsp1_N"/>
    <property type="match status" value="1"/>
</dbReference>
<dbReference type="CDD" id="cd21814">
    <property type="entry name" value="SARS-CoV-like_Nsp3_betaSM"/>
    <property type="match status" value="1"/>
</dbReference>
<dbReference type="CDD" id="cd21822">
    <property type="entry name" value="SARS-CoV-like_Nsp3_NAB"/>
    <property type="match status" value="1"/>
</dbReference>
<dbReference type="CDD" id="cd21525">
    <property type="entry name" value="SUD_C_SARS-CoV_Nsp3"/>
    <property type="match status" value="1"/>
</dbReference>
<dbReference type="CDD" id="cd21717">
    <property type="entry name" value="TM_Y_SARS-CoV-like_Nsp3_C"/>
    <property type="match status" value="1"/>
</dbReference>
<dbReference type="CDD" id="cd21467">
    <property type="entry name" value="Ubl1_cv_Nsp3_N-like"/>
    <property type="match status" value="1"/>
</dbReference>
<dbReference type="FunFam" id="1.10.8.370:FF:000001">
    <property type="entry name" value="Orf1a polyprotein"/>
    <property type="match status" value="1"/>
</dbReference>
<dbReference type="FunFam" id="2.40.10.250:FF:000001">
    <property type="entry name" value="Orf1a polyprotein"/>
    <property type="match status" value="1"/>
</dbReference>
<dbReference type="FunFam" id="3.40.220.30:FF:000001">
    <property type="entry name" value="Orf1a polyprotein"/>
    <property type="match status" value="1"/>
</dbReference>
<dbReference type="FunFam" id="1.10.150.420:FF:000001">
    <property type="entry name" value="Replicase polyprotein"/>
    <property type="match status" value="1"/>
</dbReference>
<dbReference type="FunFam" id="1.10.1840.10:FF:000001">
    <property type="entry name" value="Replicase polyprotein 1a"/>
    <property type="match status" value="1"/>
</dbReference>
<dbReference type="FunFam" id="1.10.8.1190:FF:000001">
    <property type="entry name" value="Replicase polyprotein 1a"/>
    <property type="match status" value="1"/>
</dbReference>
<dbReference type="FunFam" id="2.40.10.10:FF:000033">
    <property type="entry name" value="Replicase polyprotein 1a"/>
    <property type="match status" value="1"/>
</dbReference>
<dbReference type="Gene3D" id="1.10.8.1190">
    <property type="match status" value="1"/>
</dbReference>
<dbReference type="Gene3D" id="2.60.120.1680">
    <property type="match status" value="1"/>
</dbReference>
<dbReference type="Gene3D" id="3.10.20.350">
    <property type="match status" value="1"/>
</dbReference>
<dbReference type="Gene3D" id="3.10.20.540">
    <property type="match status" value="1"/>
</dbReference>
<dbReference type="Gene3D" id="6.10.140.2090">
    <property type="match status" value="1"/>
</dbReference>
<dbReference type="Gene3D" id="1.10.150.420">
    <property type="entry name" value="Coronavirus nonstructural protein 4 C-terminus"/>
    <property type="match status" value="1"/>
</dbReference>
<dbReference type="Gene3D" id="3.40.30.150">
    <property type="entry name" value="Coronavirus polyprotein cleavage domain"/>
    <property type="match status" value="1"/>
</dbReference>
<dbReference type="Gene3D" id="3.40.220.10">
    <property type="entry name" value="Leucine Aminopeptidase, subunit E, domain 1"/>
    <property type="match status" value="1"/>
</dbReference>
<dbReference type="Gene3D" id="1.10.1840.10">
    <property type="entry name" value="main proteinase (3clpro) structure, domain 3"/>
    <property type="match status" value="1"/>
</dbReference>
<dbReference type="Gene3D" id="3.40.220.20">
    <property type="entry name" value="Nsp3, SUD-M subdomain"/>
    <property type="match status" value="1"/>
</dbReference>
<dbReference type="Gene3D" id="3.40.220.30">
    <property type="entry name" value="Nsp3, SUD-N subdomain"/>
    <property type="match status" value="1"/>
</dbReference>
<dbReference type="Gene3D" id="1.10.8.370">
    <property type="entry name" value="nsp7 replicase"/>
    <property type="match status" value="1"/>
</dbReference>
<dbReference type="Gene3D" id="3.30.70.3540">
    <property type="entry name" value="Nsp8 replicase, head domain"/>
    <property type="match status" value="1"/>
</dbReference>
<dbReference type="Gene3D" id="2.40.10.250">
    <property type="entry name" value="Replicase NSP9"/>
    <property type="match status" value="1"/>
</dbReference>
<dbReference type="Gene3D" id="3.40.50.11020">
    <property type="entry name" value="Replicase polyprotein, nucleic acid-binding domain"/>
    <property type="match status" value="1"/>
</dbReference>
<dbReference type="Gene3D" id="2.40.10.10">
    <property type="entry name" value="Trypsin-like serine proteases"/>
    <property type="match status" value="2"/>
</dbReference>
<dbReference type="InterPro" id="IPR046443">
    <property type="entry name" value="a/bCoV_NSP1_glob"/>
</dbReference>
<dbReference type="InterPro" id="IPR046442">
    <property type="entry name" value="bCoV_NSP1_C"/>
</dbReference>
<dbReference type="InterPro" id="IPR043613">
    <property type="entry name" value="CoV_NSP2_C"/>
</dbReference>
<dbReference type="InterPro" id="IPR047573">
    <property type="entry name" value="CoV_NSP2_M"/>
</dbReference>
<dbReference type="InterPro" id="IPR049894">
    <property type="entry name" value="COV_NSP3_3ECTO"/>
</dbReference>
<dbReference type="InterPro" id="IPR043611">
    <property type="entry name" value="CoV_NSP3_C"/>
</dbReference>
<dbReference type="InterPro" id="IPR047566">
    <property type="entry name" value="CoV_NSP3_Y"/>
</dbReference>
<dbReference type="InterPro" id="IPR032505">
    <property type="entry name" value="CoV_NSP4_C"/>
</dbReference>
<dbReference type="InterPro" id="IPR043612">
    <property type="entry name" value="CoV_NSP4_N"/>
</dbReference>
<dbReference type="InterPro" id="IPR022733">
    <property type="entry name" value="DPUP_SUD_C_bCoV"/>
</dbReference>
<dbReference type="InterPro" id="IPR002589">
    <property type="entry name" value="Macro_dom"/>
</dbReference>
<dbReference type="InterPro" id="IPR043472">
    <property type="entry name" value="Macro_dom-like"/>
</dbReference>
<dbReference type="InterPro" id="IPR044371">
    <property type="entry name" value="Macro_X_NSP3-like"/>
</dbReference>
<dbReference type="InterPro" id="IPR036333">
    <property type="entry name" value="NSP10_sf_CoV"/>
</dbReference>
<dbReference type="InterPro" id="IPR021590">
    <property type="entry name" value="NSP1_glob_bCoV"/>
</dbReference>
<dbReference type="InterPro" id="IPR038030">
    <property type="entry name" value="NSP1_glob_sf_bCoV"/>
</dbReference>
<dbReference type="InterPro" id="IPR043615">
    <property type="entry name" value="NSP2_N_CoV"/>
</dbReference>
<dbReference type="InterPro" id="IPR044389">
    <property type="entry name" value="NSP2_SARS-CoV-like"/>
</dbReference>
<dbReference type="InterPro" id="IPR024375">
    <property type="entry name" value="NSP3_bCoV"/>
</dbReference>
<dbReference type="InterPro" id="IPR047567">
    <property type="entry name" value="NSP3_G2M_bCoV"/>
</dbReference>
<dbReference type="InterPro" id="IPR024358">
    <property type="entry name" value="NSP3_N_bCoV"/>
</dbReference>
<dbReference type="InterPro" id="IPR032592">
    <property type="entry name" value="NSP3_NAB_bCoV"/>
</dbReference>
<dbReference type="InterPro" id="IPR042570">
    <property type="entry name" value="NSP3_NAB_bCoV_sf"/>
</dbReference>
<dbReference type="InterPro" id="IPR038166">
    <property type="entry name" value="NSP3_PL2pro_sf_bCoV"/>
</dbReference>
<dbReference type="InterPro" id="IPR038400">
    <property type="entry name" value="NSP3_SUD-M_sf_bCoV"/>
</dbReference>
<dbReference type="InterPro" id="IPR044864">
    <property type="entry name" value="NSP3_SUD-N_bCoV"/>
</dbReference>
<dbReference type="InterPro" id="IPR044374">
    <property type="entry name" value="NSP3_SUD-N_SARS-CoV"/>
</dbReference>
<dbReference type="InterPro" id="IPR043478">
    <property type="entry name" value="NSP3_SUD-N_sf_bCoV"/>
</dbReference>
<dbReference type="InterPro" id="IPR044357">
    <property type="entry name" value="NSP3_Ubl1_dom_CoV"/>
</dbReference>
<dbReference type="InterPro" id="IPR044353">
    <property type="entry name" value="Nsp3_Ubl2_dom_CoV"/>
</dbReference>
<dbReference type="InterPro" id="IPR038083">
    <property type="entry name" value="NSP3A-like"/>
</dbReference>
<dbReference type="InterPro" id="IPR038123">
    <property type="entry name" value="NSP4_C_sf_CoV"/>
</dbReference>
<dbReference type="InterPro" id="IPR044367">
    <property type="entry name" value="NSP6_betaCoV"/>
</dbReference>
<dbReference type="InterPro" id="IPR043610">
    <property type="entry name" value="NSP6_CoV"/>
</dbReference>
<dbReference type="InterPro" id="IPR014828">
    <property type="entry name" value="NSP7_CoV"/>
</dbReference>
<dbReference type="InterPro" id="IPR037204">
    <property type="entry name" value="NSP7_sf_CoV"/>
</dbReference>
<dbReference type="InterPro" id="IPR014829">
    <property type="entry name" value="NSP8_CoV"/>
</dbReference>
<dbReference type="InterPro" id="IPR037230">
    <property type="entry name" value="NSP8_sf_CoV"/>
</dbReference>
<dbReference type="InterPro" id="IPR014822">
    <property type="entry name" value="NSP9_CoV"/>
</dbReference>
<dbReference type="InterPro" id="IPR036499">
    <property type="entry name" value="NSP9_sf_CoV"/>
</dbReference>
<dbReference type="InterPro" id="IPR013016">
    <property type="entry name" value="Peptidase_C16_CoV"/>
</dbReference>
<dbReference type="InterPro" id="IPR008740">
    <property type="entry name" value="Peptidase_C30_CoV"/>
</dbReference>
<dbReference type="InterPro" id="IPR043477">
    <property type="entry name" value="Peptidase_C30_dom3_CoV"/>
</dbReference>
<dbReference type="InterPro" id="IPR009003">
    <property type="entry name" value="Peptidase_S1_PA"/>
</dbReference>
<dbReference type="InterPro" id="IPR043504">
    <property type="entry name" value="Peptidase_S1_PA_chymotrypsin"/>
</dbReference>
<dbReference type="InterPro" id="IPR043177">
    <property type="entry name" value="PLpro_N_sf_CoV"/>
</dbReference>
<dbReference type="InterPro" id="IPR043503">
    <property type="entry name" value="PLpro_palm_finger_dom_CoV"/>
</dbReference>
<dbReference type="InterPro" id="IPR043178">
    <property type="entry name" value="PLpro_thumb_sf_CoV"/>
</dbReference>
<dbReference type="InterPro" id="IPR018995">
    <property type="entry name" value="RNA_synth_NSP10_CoV"/>
</dbReference>
<dbReference type="Pfam" id="PF16251">
    <property type="entry name" value="bCoV_NAB"/>
    <property type="match status" value="1"/>
</dbReference>
<dbReference type="Pfam" id="PF11501">
    <property type="entry name" value="bCoV_NSP1"/>
    <property type="match status" value="1"/>
</dbReference>
<dbReference type="Pfam" id="PF12379">
    <property type="entry name" value="bCoV_NSP3_N"/>
    <property type="match status" value="1"/>
</dbReference>
<dbReference type="Pfam" id="PF12124">
    <property type="entry name" value="bCoV_SUD_C"/>
    <property type="match status" value="1"/>
</dbReference>
<dbReference type="Pfam" id="PF11633">
    <property type="entry name" value="bCoV_SUD_M"/>
    <property type="match status" value="1"/>
</dbReference>
<dbReference type="Pfam" id="PF09401">
    <property type="entry name" value="CoV_NSP10"/>
    <property type="match status" value="1"/>
</dbReference>
<dbReference type="Pfam" id="PF19212">
    <property type="entry name" value="CoV_NSP2_C"/>
    <property type="match status" value="1"/>
</dbReference>
<dbReference type="Pfam" id="PF19211">
    <property type="entry name" value="CoV_NSP2_N"/>
    <property type="match status" value="1"/>
</dbReference>
<dbReference type="Pfam" id="PF19218">
    <property type="entry name" value="CoV_NSP3_C"/>
    <property type="match status" value="1"/>
</dbReference>
<dbReference type="Pfam" id="PF16348">
    <property type="entry name" value="CoV_NSP4_C"/>
    <property type="match status" value="1"/>
</dbReference>
<dbReference type="Pfam" id="PF19217">
    <property type="entry name" value="CoV_NSP4_N"/>
    <property type="match status" value="1"/>
</dbReference>
<dbReference type="Pfam" id="PF19213">
    <property type="entry name" value="CoV_NSP6"/>
    <property type="match status" value="1"/>
</dbReference>
<dbReference type="Pfam" id="PF08716">
    <property type="entry name" value="CoV_NSP7"/>
    <property type="match status" value="1"/>
</dbReference>
<dbReference type="Pfam" id="PF08717">
    <property type="entry name" value="CoV_NSP8"/>
    <property type="match status" value="1"/>
</dbReference>
<dbReference type="Pfam" id="PF08710">
    <property type="entry name" value="CoV_NSP9"/>
    <property type="match status" value="1"/>
</dbReference>
<dbReference type="Pfam" id="PF08715">
    <property type="entry name" value="CoV_peptidase"/>
    <property type="match status" value="1"/>
</dbReference>
<dbReference type="Pfam" id="PF01661">
    <property type="entry name" value="Macro"/>
    <property type="match status" value="1"/>
</dbReference>
<dbReference type="Pfam" id="PF05409">
    <property type="entry name" value="Peptidase_C30"/>
    <property type="match status" value="1"/>
</dbReference>
<dbReference type="SMART" id="SM00506">
    <property type="entry name" value="A1pp"/>
    <property type="match status" value="1"/>
</dbReference>
<dbReference type="SUPFAM" id="SSF144246">
    <property type="entry name" value="Coronavirus NSP10-like"/>
    <property type="match status" value="1"/>
</dbReference>
<dbReference type="SUPFAM" id="SSF140367">
    <property type="entry name" value="Coronavirus NSP7-like"/>
    <property type="match status" value="1"/>
</dbReference>
<dbReference type="SUPFAM" id="SSF143076">
    <property type="entry name" value="Coronavirus NSP8-like"/>
    <property type="match status" value="1"/>
</dbReference>
<dbReference type="SUPFAM" id="SSF52949">
    <property type="entry name" value="Macro domain-like"/>
    <property type="match status" value="1"/>
</dbReference>
<dbReference type="SUPFAM" id="SSF159936">
    <property type="entry name" value="NSP3A-like"/>
    <property type="match status" value="1"/>
</dbReference>
<dbReference type="SUPFAM" id="SSF101816">
    <property type="entry name" value="Replicase NSP9"/>
    <property type="match status" value="1"/>
</dbReference>
<dbReference type="SUPFAM" id="SSF160099">
    <property type="entry name" value="SARS Nsp1-like"/>
    <property type="match status" value="1"/>
</dbReference>
<dbReference type="SUPFAM" id="SSF50494">
    <property type="entry name" value="Trypsin-like serine proteases"/>
    <property type="match status" value="1"/>
</dbReference>
<dbReference type="PROSITE" id="PS51963">
    <property type="entry name" value="BCOV_NSP1_C"/>
    <property type="match status" value="1"/>
</dbReference>
<dbReference type="PROSITE" id="PS51942">
    <property type="entry name" value="BCOV_NSP3C_C"/>
    <property type="match status" value="1"/>
</dbReference>
<dbReference type="PROSITE" id="PS51941">
    <property type="entry name" value="BCOV_NSP3C_M"/>
    <property type="match status" value="1"/>
</dbReference>
<dbReference type="PROSITE" id="PS51994">
    <property type="entry name" value="BCOV_NSP3E_G2M"/>
    <property type="match status" value="1"/>
</dbReference>
<dbReference type="PROSITE" id="PS51945">
    <property type="entry name" value="BCOV_NSP3E_NAB"/>
    <property type="match status" value="1"/>
</dbReference>
<dbReference type="PROSITE" id="PS51993">
    <property type="entry name" value="COV_3ECTO"/>
    <property type="match status" value="1"/>
</dbReference>
<dbReference type="PROSITE" id="PS51952">
    <property type="entry name" value="COV_EXON_MTASE_COACT"/>
    <property type="match status" value="1"/>
</dbReference>
<dbReference type="PROSITE" id="PS51962">
    <property type="entry name" value="COV_NSP1"/>
    <property type="match status" value="1"/>
</dbReference>
<dbReference type="PROSITE" id="PS51991">
    <property type="entry name" value="COV_NSP2_C"/>
    <property type="match status" value="1"/>
</dbReference>
<dbReference type="PROSITE" id="PS51990">
    <property type="entry name" value="COV_NSP2_M"/>
    <property type="match status" value="1"/>
</dbReference>
<dbReference type="PROSITE" id="PS51989">
    <property type="entry name" value="COV_NSP2_N"/>
    <property type="match status" value="1"/>
</dbReference>
<dbReference type="PROSITE" id="PS51992">
    <property type="entry name" value="COV_NSP3_Y"/>
    <property type="match status" value="1"/>
</dbReference>
<dbReference type="PROSITE" id="PS51943">
    <property type="entry name" value="COV_NSP3A_UBL"/>
    <property type="match status" value="1"/>
</dbReference>
<dbReference type="PROSITE" id="PS51944">
    <property type="entry name" value="COV_NSP3D_UBL"/>
    <property type="match status" value="1"/>
</dbReference>
<dbReference type="PROSITE" id="PS51946">
    <property type="entry name" value="COV_NSP4C"/>
    <property type="match status" value="1"/>
</dbReference>
<dbReference type="PROSITE" id="PS51949">
    <property type="entry name" value="COV_NSP7"/>
    <property type="match status" value="1"/>
</dbReference>
<dbReference type="PROSITE" id="PS51950">
    <property type="entry name" value="COV_NSP8"/>
    <property type="match status" value="1"/>
</dbReference>
<dbReference type="PROSITE" id="PS51951">
    <property type="entry name" value="COV_NSP9_SSRNA_BD"/>
    <property type="match status" value="1"/>
</dbReference>
<dbReference type="PROSITE" id="PS51442">
    <property type="entry name" value="M_PRO"/>
    <property type="match status" value="1"/>
</dbReference>
<dbReference type="PROSITE" id="PS51154">
    <property type="entry name" value="MACRO"/>
    <property type="match status" value="1"/>
</dbReference>
<dbReference type="PROSITE" id="PS51124">
    <property type="entry name" value="PEPTIDASE_C16"/>
    <property type="match status" value="1"/>
</dbReference>
<dbReference type="PROSITE" id="PS51940">
    <property type="entry name" value="SARS_NSP3C_N"/>
    <property type="match status" value="1"/>
</dbReference>
<sequence length="4376" mass="485585">MESLVLGVNEKTHVQLSLPVLQVRDVLVRGFGDSVEEALSEAREHLKNGTCGLVELEKGVLPQLEQPYVFIKRSDALSTNHGHKVVELVAELDGIQFGRSGITLGVLVPHVGETPIAYRNVLLRKNGNKGAGGHSFGIDLKSYDLGDELGTDPIEDYEQNWNTKHGSGALRELTRELNGGVVTRYVDNNFCGPDGYPLECIKDFLARAGKSMCTLSEQLDYIESKRGVYCCREHEHEIVWFTERSEKSYEHQTPFEIKSAKKFDTFKGECPKFVFPLNSKVKVIQPRVEKKKTEGFMGRIRSVYPVATPQECNDMHLSTLMKCNHCDEVSWQTCDFLKATCEQCGTENLVCEGPTTCGYLPTNAVVKMPCPACQDPEVGPEHSVADYHNHSNIETRLRKGGRTKCFGGCVFSYVGCYNKRAYWVPRASANIGANHTGITGENVETLNEDLLEILNRERVNINIVGDFRFNEEVAIILASFSASPSAFIETVKGLDYKSFKVIVESCGNYKVTNGKPVTGAWNIGQQRSILTPLCGFPSQAAGVIRSIFSRTLDAANHSILDLQRAAVTTLDGISEQSLRLVDAMVYTSDLLTNSVVVMAYVTGGLVQQTMQWLSNMLGTAVDKLKPVFTWVEAKLSAGVEFLRDAWEILKFLITGVFDVIKGQIQVATDNIKECVKIFLGVVNKALEMCLDQVTIAGTKLRALNLGEVFIAQSRGLYRQCIRGKEQLQLLMPLKAPKEVTFLEGDAHDTVLTSEEVVLKSGELEALETPIDSFTSGAVVGTPVCINGLMLLELENKEQYCALSPGLLATNNVFRLKGGAPVKGVTFGEDTVLEVQGYKNVKITFELDVRVDKVLNEKCSVYTVESGTEVTEFACVVAEAVVKTLQPVSDLLTPMGIDLDEWSVATFYLFDDAGEEKLSSRMYCSFYPPDEEEDCEECEDEEETCEHEYGTEDDYKGLPLEFGASTETPHVEEEEEEEDWLDDAIEAEPEPEPLPEEPVNQFVGYLKLTDNVAIKCIDIVKEAQSAKPTVIVNAANTHLKHGGGVAGALNKATNGAMQNESDEYIRQNGPLTVGGSCLLSGHNLAEKCLHVVGPNLNAGEDVQLLKRAYENFNSQDVLLAPLLSAGIFGAKPLQSLKMCVEIVRTQVYLAVNDKSLYDQIVLDYLDSLKPKVESPNKEEEPKLEEPKAVQPVAEKPVDVKPKIKACIDEVTTTLEETKFLTNKLLLFADINGKLYQDSQNMLRGEDMSFLEKDAPYIVGDVITSGDITCVIIPAKKSGGTTEMLARALKEVPVAEYITTYPGQGCAGYTLEEAKTALKKCKSAFYVLPSETPNEKEEVLGTVSWNLREMLAHAEETRKLMPICLDVRAIMATIQRKYKGIKVQEGIVDYGVRFFFYTSKEPVASIITKLNSLNEPLVTMPIGYVTHGLNLEEAARCMRSLKAPAVVSVSSPDAVTAYNGYLTSSSKTPEEYFVETTSLAGSYRDWSYSGQRTELGVEFLKRGDKIVYHTTGSPIEFHLDGEVLPLDKLKSLLSLREVKTIKVFTTVDNTNLHTHIVDMSMTYGQQFGPTYLDGADVTKIKPHVNHEGKTFFVLPSDDTLRSEAFEYYHTIDESFLGRYMSALNHTKKWKFPQVGGLTSIKWADNNCYLSSVLLALQQVEVKFNAPALQEAYYRARAGDAANFCALILAYSNKTVGELGDVRETMTHLLQHANLESAKRVLNVVCKHCGQKTTTLKGVEAVMYMGTLSYDELKTGVSIPCVCGRNATQYLVQQESSFVMMSAPPAEYKLQQGAFLCANEYTGNYQCGHYTHITAKETLYRVDGAHLTKMSEYKGPVTDVFYKETSYTTAIKPVSYKLDGVTYTEIEPKLDGYYKKGNAYYTEQPIDLVPTQPMPNASFDNFKLTCSNTKFADDLNQMTGFKKPASRELTVTFFPDLNGDVVAIDYRHYSTSFKKGAKLVHKPILWHINQTTNKTTYKPNIWCLRCLWSTKPVDTSNSFEVLVVEDTQGMDNLACESQTTTSEEVVENPTVQKEIIECDVKTTEVVGNVILKPSEEGVKVTQELGHEDLMAAYVEETSITIKKPNELSLALGLKTLATHGAAAINSVPWSKILAYVKPFLGQTAVITSNCIKKCVQRVFSNYMPYVITLLFQLCTFTKSTNSRIKASLPTTIAKNSVKSVAKLCLDVCINYVKSPKFSKLFTIVMWLLLLSICLGSLTYVTAVLGVCLSSLGVPSYCDGVRELYINSSNVTTMDFCQGYFPCSVCLSGLDSLDSYPALETIQVTISSYKLDLTFLGLAAEWLLAYMLFTKFFYLLGLSAIMQAFFGYFASHFISNSWLMWFIISIVQMAPVSAMVRMYIFFASFYYVWKSYVHIMDGCTSSTCMMCYKRNRATRVECTTIVNGVKRSFYVYANGGRGFCKAHNWNCLNCDTFCAGSTFISDEVARDLSLQFKRPINPTDQSAYVVDSVTVKNGALHLYFDKAGQKTYERHPLSHFVNLDNLRANNTKGSLPINVIVFDGKSKCEESAAKSASVYYSQLMCQPILLLDQALVSDVGDSTEVSVKMFDAYVDTFSATFSVPMEKLKALVATAHSELAKGVALDGVLSTFVSAARQGVVDTDVDTKDVIECLKLSHHSDIEVTGDSCNNFMLTYNKVENMTPRDLGACIDCNARHINAQVAKSHNVSLVWNVKDYMSLSEQLRKQIRSAAKKNNIPFRLTCATTRQVVNVITTKISLKGGKVVSTWFKLLLKVTLLCVLAALFCYVIMPVHSLSVHDGYTNEIIGYKAIQDGVTRDIVSTDDCFANKHAGFDSWFSQRGGSYRNDKNCPVVAAIITREIGFIVPGLPGTVLRALNGDFLHFLPRVFSAVGNICYTPSKLIEYSDFATSACVLAAECTIFKDAMGKPVPYCYDTNLLEGSISYSELRPDTRYVLMDGSIIQFPNTYLEGSVRVVTTFDAEYCRHGTCERSEVGVCLSTSGRWVLNNEHYRALPGVFCGVDAMNLIANIFTPLVQPVGALDVSASVVAGGIIAILVTCAAYYFMKFRRAFGEYNHVVAANALLFLMSFTILCLAPAYSFLPGVYSIFYLYLTFYFTNDVSFLAHLQWFAMFSPIVPFWITAIYVFCISLKHFHWFFSNYLKKRVMFNGVTFSTFEEAALCTFLLNKEMYLRLRSETLLPLTQYNRYLALYNKYKYFSGALDTTSYREAACCHLAKALNDFSNSGADVLYQPPQTSITSAVLQSGFRKMAFPSGKVEGCMVQVTCGTTTLNGLWLDDTVYCPRHVVCTAEDMLNPNYDDLLIRKSNHSFLVQAGNVQLRVIGHSMQNCLLRLKVDTSNPKTPKYKFVRIQPGQTFSVLACYNGSPSGVYQCAMRPNHTIKGSFLNGSCGSVGFNIDYDCVSFCYMHHMELPTGVHAGTDLEGKFYGPFVDRQTAQAAGTDTTITLNVLAWLYAAVINGDRWFLNRFTTTLNDFNLVAMKYNYEPLTQDHVDILGPLSAQTGIAVLDMCAALKELLQNGMNGRTILGSTILEDEFTPFDVVRQCSGVTFQGKFKKIVKGTHHWMLLTFLTSLLILVQSTQWSLFFFVYENAFLPFALGIMAVAACAMLLVKHKHAFLCLFLLPSLATVAYFNMVYMPASWVMRIMTWLELADTSLSGYRLKDCVMYASALVLLILMTARTVYDDAARRVWTLMNVITLVYKVYYGNSLDQAISMWALVISVTSNYSGVVTTIMFLARAIVFVCVEYYPLLFITGNTLQCIMLVYCFLGYCCCCYFGLFCLLNRYFRLTLGVYDYLVSTQEFRYMNSQGLLPPKSSIDAFKLNIKLLGIGGKPCIKVATVQSKMSDVKCTSVVLLSVLQQLRVESSSKLWAQCVQLHNDILLAKDTTEAFEKMVSLLSVLLSMQGAVDINKLCEEMLDNRATLQAIASEFSSLPSYAAYATAQEAYEQAVSNGDSEVVLKKLKKSLNVAKSEFDHDAAMQRKLEKMADQAMTQMYKQARSEDKRAKVTSAMQTMLFTMLRKLDNDALNNIINNARDGCVPLNIIPLTTAAKLMVVVPDYGTYKNTCDGNTFTYASALWEIQQVVDADSKIVQLSEINMDNSPNLAWPLIVTALRANSAVKLQNNELSPVALRQMSCAAGTTQTACTDDNALAYYNNAKGGRFVLALLSDHQDLKWARFPKSDGTGTIYTELEPPCRFVTDTPKGPKVKYLYFIKGLNNLNRGMVLGSLAATVRLQAGNATEVPANSTVLSFCAFAVDPAKAYKDYLASGGQPITNCVKMLCTHTGTGQAITVTPEANMDQESFGGASCCLYCRCHIDHPNPKGFCDLKGKYVQIPTTCANDPVGFTLRNTVCTVCGMWKGYGCSCDQLREPMMQSADASTFLNGFAV</sequence>
<name>R1A_BCHK3</name>
<accession>P0C6F8</accession>
<accession>Q3LZX2</accession>
<organismHost>
    <name type="scientific">Rhinolophus sinicus</name>
    <name type="common">Chinese rufous horseshoe bat</name>
    <dbReference type="NCBI Taxonomy" id="89399"/>
</organismHost>